<dbReference type="EMBL" id="MF806533">
    <property type="protein sequence ID" value="AXF50652.1"/>
    <property type="molecule type" value="Genomic_DNA"/>
</dbReference>
<comment type="function">
    <text evidence="1 2 4">Part of the gene cluster that mediates the biosynthesis of squalestatin S1 (SQS1, also known as zaragozic acid A), a heavily oxidized fungal polyketide that offers potent cholesterol lowering activity by targeting squalene synthase (SS) (PubMed:28605916). SQS1 is composed of a 2,8-dioxobicyclic[3.2.1]octane-3,4,5-tricarboxyclic acid core that is connected to two lipophilic polyketide arms (PubMed:28605916). These initial steps feature the priming of an unusual benzoic acid starter unit onto the highly reducing polyketide synthase clz14, followed by oxaloacetate extension and product release to generate a tricarboxylic acid containing product (PubMed:28605916). The phenylalanine ammonia lyase (PAL) clz10 and the acyl-CoA ligase clz12 are involved in transforming phenylalanine into benzoyl-CoA (PubMed:28605916). The citrate synthase-like protein clz17 is involved in connecting the C-alpha-carbons of the hexaketide chain and oxaloacetate to afford the tricarboxylic acid unit (PubMed:28605916). The potential hydrolytic enzymes, clz11 and clz13, are in close proximity to pks2 and may participate in product release (PubMed:28605916). On the other side, the tetraketide arm is synthesized by a the squalestatin tetraketide synthase clz2 and enzymatically esterified to the core in the last biosynthetic step, by the acetyltransferase clz6 (By similarity). The biosynthesis of the tetraketide must involve 3 rounds of chain extension (By similarity). After the first and second rounds methyl-transfer occurs, and in all rounds of extension the ketoreductase and dehydratase are active (By similarity). The enoyl reductase and C-MeT of clz2 are not active in the final round of extension (By similarity). The acetyltransferase clz6 appears to have a broad substrate selectivity for its acyl CoA substrate, allowing the in vitro synthesis of novel squalestatins (By similarity). The biosynthesis of SQS1 requires several oxidative steps likely performed by oxidoreductases clz3, clz15 and clz16 (Probable). Finally, in support of the identification of the cluster as being responsible for SQS1 production, the cluster contains a gene encoding a putative squalene synthase (SS) clz20, suggesting a likely mechanism for self-resistance (Probable).</text>
</comment>
<comment type="pathway">
    <text evidence="4">Secondary metabolite biosynthesis.</text>
</comment>
<name>CLZ1_COCLU</name>
<organism>
    <name type="scientific">Cochliobolus lunatus</name>
    <name type="common">Filamentous fungus</name>
    <name type="synonym">Curvularia lunata</name>
    <dbReference type="NCBI Taxonomy" id="5503"/>
    <lineage>
        <taxon>Eukaryota</taxon>
        <taxon>Fungi</taxon>
        <taxon>Dikarya</taxon>
        <taxon>Ascomycota</taxon>
        <taxon>Pezizomycotina</taxon>
        <taxon>Dothideomycetes</taxon>
        <taxon>Pleosporomycetidae</taxon>
        <taxon>Pleosporales</taxon>
        <taxon>Pleosporineae</taxon>
        <taxon>Pleosporaceae</taxon>
        <taxon>Curvularia</taxon>
    </lineage>
</organism>
<gene>
    <name evidence="3" type="primary">clz1</name>
</gene>
<accession>A0A345BJN9</accession>
<protein>
    <recommendedName>
        <fullName evidence="3">Zaragozic acid A biosynthesis cluster protein 1</fullName>
    </recommendedName>
    <alternativeName>
        <fullName evidence="3">Squalestatin S1 biosynthesis cluster protein clz1</fullName>
    </alternativeName>
</protein>
<evidence type="ECO:0000250" key="1">
    <source>
        <dbReference type="UniProtKB" id="A0A3G1DJH7"/>
    </source>
</evidence>
<evidence type="ECO:0000269" key="2">
    <source>
    </source>
</evidence>
<evidence type="ECO:0000303" key="3">
    <source>
    </source>
</evidence>
<evidence type="ECO:0000305" key="4">
    <source>
    </source>
</evidence>
<sequence length="277" mass="31370">MRSPWADDVEYQKDPLFLNYEKRIWDNSTNQTTFSWHKDTREIASSSILALALVHDVWGPVIAACSIDARWAASDIYVIPTNSTVVFSNTTDSLMESLRHSNQGNREANIAKYGLSRNPIDIQLEWAEKLNRKYIFDLSVKPSQRMKAAPNEEINAIETFLMDIIPSMRVDPSVSTLLGLIVSDSISRTINTTRAPWGMVEEVDSNGSWNYSEVVRNSGNENRPNPDDDNGYVMRVIADRYGYGFALRVRFGVLYLESLPNGLVPIGDIFVLVWDLN</sequence>
<proteinExistence type="inferred from homology"/>
<feature type="chain" id="PRO_0000452623" description="Zaragozic acid A biosynthesis cluster protein 1">
    <location>
        <begin position="1"/>
        <end position="277"/>
    </location>
</feature>
<reference key="1">
    <citation type="journal article" date="2017" name="Org. Lett.">
        <title>Identification and heterologous production of a benzoyl-primed tricarboxylic acid polyketide intermediate from the zaragozic acid A biosynthetic pathway.</title>
        <authorList>
            <person name="Liu N."/>
            <person name="Hung Y.S."/>
            <person name="Gao S.S."/>
            <person name="Hang L."/>
            <person name="Zou Y."/>
            <person name="Chooi Y.H."/>
            <person name="Tang Y."/>
        </authorList>
    </citation>
    <scope>NUCLEOTIDE SEQUENCE [GENOMIC DNA]</scope>
    <scope>FUNCTION</scope>
    <scope>PATHWAY</scope>
    <source>
        <strain>ATCC 74067</strain>
    </source>
</reference>